<geneLocation type="plasmid" evidence="13">
    <name>pIB6</name>
</geneLocation>
<geneLocation type="plasmid" evidence="12">
    <name>unnamed</name>
</geneLocation>
<comment type="function">
    <text evidence="2 4 5">Glycosylates autotransporter AIDA-I (PubMed:11442838, PubMed:25211077, PubMed:25310236). Catalyzes the addition of both L, D-heptose and D, D-heptose sugars (PubMed:25211077, PubMed:25310236). Probably by glycosylating AIDA-I, involved in bacteria adhesion to host mammalian cells (PubMed:25211077).</text>
</comment>
<comment type="catalytic activity">
    <reaction evidence="4 5 10">
        <text>ADP-D-glycero-beta-D-manno-heptose + L-seryl-[protein] = O-(D-glycero-alpha-D-manno-heptosyl)-L-seryl-[protein] + ADP + H(+)</text>
        <dbReference type="Rhea" id="RHEA:75903"/>
        <dbReference type="Rhea" id="RHEA-COMP:9863"/>
        <dbReference type="Rhea" id="RHEA-COMP:18605"/>
        <dbReference type="ChEBI" id="CHEBI:15378"/>
        <dbReference type="ChEBI" id="CHEBI:29999"/>
        <dbReference type="ChEBI" id="CHEBI:59967"/>
        <dbReference type="ChEBI" id="CHEBI:194481"/>
        <dbReference type="ChEBI" id="CHEBI:456216"/>
    </reaction>
    <physiologicalReaction direction="left-to-right" evidence="4 5">
        <dbReference type="Rhea" id="RHEA:75904"/>
    </physiologicalReaction>
</comment>
<comment type="catalytic activity">
    <reaction evidence="4 5 10">
        <text>ADP-L-glycero-beta-D-manno-heptose + L-seryl-[protein] = O-(L-glycero-alpha-D-manno-heptosyl)-L-seryl-[protein] + ADP + H(+)</text>
        <dbReference type="Rhea" id="RHEA:75907"/>
        <dbReference type="Rhea" id="RHEA-COMP:9863"/>
        <dbReference type="Rhea" id="RHEA-COMP:18606"/>
        <dbReference type="ChEBI" id="CHEBI:15378"/>
        <dbReference type="ChEBI" id="CHEBI:29999"/>
        <dbReference type="ChEBI" id="CHEBI:61506"/>
        <dbReference type="ChEBI" id="CHEBI:194483"/>
        <dbReference type="ChEBI" id="CHEBI:456216"/>
    </reaction>
    <physiologicalReaction direction="left-to-right" evidence="4 5">
        <dbReference type="Rhea" id="RHEA:75908"/>
    </physiologicalReaction>
</comment>
<comment type="cofactor">
    <cofactor evidence="4">
        <name>Fe(3+)</name>
        <dbReference type="ChEBI" id="CHEBI:29034"/>
    </cofactor>
    <text evidence="4">Binds 1 Fe(3+) cation per subunit.</text>
</comment>
<comment type="subunit">
    <text evidence="4">Homododecamer composed of 6 homodimers forming a ring.</text>
</comment>
<comment type="subcellular location">
    <subcellularLocation>
        <location evidence="4">Cytoplasm</location>
    </subcellularLocation>
</comment>
<comment type="induction">
    <text evidence="3">At the early-stationary phase, likely due to nutrient starvation (at protein level).</text>
</comment>
<comment type="disruption phenotype">
    <text evidence="2 4">Loss of bacteria adhesion to human HeLa cells (PubMed:11442838, PubMed:25211077). Reduces glycosylation of AIDA-I (PubMed:11442838, PubMed:25211077).</text>
</comment>
<comment type="similarity">
    <text evidence="9">Belongs to the glycosyltransferase 9 family.</text>
</comment>
<accession>Q93K96</accession>
<keyword id="KW-0963">Cytoplasm</keyword>
<keyword id="KW-0328">Glycosyltransferase</keyword>
<keyword id="KW-0408">Iron</keyword>
<keyword id="KW-0479">Metal-binding</keyword>
<keyword id="KW-0614">Plasmid</keyword>
<keyword id="KW-0808">Transferase</keyword>
<gene>
    <name evidence="6" type="primary">aah</name>
</gene>
<protein>
    <recommendedName>
        <fullName evidence="8">Autotransporter heptosyltransferase Aah</fullName>
        <ecNumber evidence="4 5 10">2.4.99.-</ecNumber>
    </recommendedName>
    <alternativeName>
        <fullName evidence="7">AIDA-associated heptosyltransferase</fullName>
    </alternativeName>
    <alternativeName>
        <fullName evidence="6">Autotransporter adhesin heptosyltransferase</fullName>
    </alternativeName>
</protein>
<organism evidence="13">
    <name type="scientific">Escherichia coli</name>
    <dbReference type="NCBI Taxonomy" id="562"/>
    <lineage>
        <taxon>Bacteria</taxon>
        <taxon>Pseudomonadati</taxon>
        <taxon>Pseudomonadota</taxon>
        <taxon>Gammaproteobacteria</taxon>
        <taxon>Enterobacterales</taxon>
        <taxon>Enterobacteriaceae</taxon>
        <taxon>Escherichia</taxon>
    </lineage>
</organism>
<sequence>MTFLSPPEIPTIKADNGTYYDFNNGARILFPKGEWHVNIIDEESGNILFSCDTKAGWVTSTKKYYVKFRIQAFKKGDEKPFLDTVMELKDKPVLISFPTGTLGDIIAWFHYAEKFRIKHQCKLECSVSEEFITLLSDNYPDIKFTSAQDKYEGKPYATYRIGLFFNGDTDNQPVDFRLVGFHRNAGYILGVSPQEDPPRLNLSAERKIQEPYVCIAVQSTAQAKHWNNGLGWAEVVRYLKELGYRVLCIDRNAHAGNGFVWNHIPWGAEDFTGALPLQERVDLLRHASFFVGLSSGLSWLAWASRIPVVLISGFSRPDSEFYTPWRVFNSHGCNGCWDNTNYNFDHTDFLWCPVHKGTDRQFECTRLITGKQVCGVIRTLHSYLTNHDRII</sequence>
<dbReference type="EC" id="2.4.99.-" evidence="4 5 10"/>
<dbReference type="EMBL" id="GU810159">
    <property type="protein sequence ID" value="ADH10229.1"/>
    <property type="molecule type" value="Genomic_DNA"/>
</dbReference>
<dbReference type="EMBL" id="AJ304444">
    <property type="protein sequence ID" value="CAC43407.1"/>
    <property type="molecule type" value="Genomic_DNA"/>
</dbReference>
<dbReference type="RefSeq" id="WP_032490104.1">
    <property type="nucleotide sequence ID" value="NZ_NLIZ01000043.1"/>
</dbReference>
<dbReference type="SMR" id="Q93K96"/>
<dbReference type="GO" id="GO:0005829">
    <property type="term" value="C:cytosol"/>
    <property type="evidence" value="ECO:0007669"/>
    <property type="project" value="TreeGrafter"/>
</dbReference>
<dbReference type="GO" id="GO:0008713">
    <property type="term" value="F:ADP-heptose-lipopolysaccharide heptosyltransferase activity"/>
    <property type="evidence" value="ECO:0007669"/>
    <property type="project" value="TreeGrafter"/>
</dbReference>
<dbReference type="GO" id="GO:0046872">
    <property type="term" value="F:metal ion binding"/>
    <property type="evidence" value="ECO:0007669"/>
    <property type="project" value="UniProtKB-KW"/>
</dbReference>
<dbReference type="GO" id="GO:0009244">
    <property type="term" value="P:lipopolysaccharide core region biosynthetic process"/>
    <property type="evidence" value="ECO:0007669"/>
    <property type="project" value="TreeGrafter"/>
</dbReference>
<dbReference type="CDD" id="cd03789">
    <property type="entry name" value="GT9_LPS_heptosyltransferase"/>
    <property type="match status" value="1"/>
</dbReference>
<dbReference type="FunFam" id="3.40.50.2000:FF:000414">
    <property type="entry name" value="Autotransporter strand-loop-strand O-heptosyltransferase"/>
    <property type="match status" value="1"/>
</dbReference>
<dbReference type="Gene3D" id="3.40.50.2000">
    <property type="entry name" value="Glycogen Phosphorylase B"/>
    <property type="match status" value="1"/>
</dbReference>
<dbReference type="InterPro" id="IPR030929">
    <property type="entry name" value="Aah/TibC-like"/>
</dbReference>
<dbReference type="InterPro" id="IPR002201">
    <property type="entry name" value="Glyco_trans_9"/>
</dbReference>
<dbReference type="InterPro" id="IPR051199">
    <property type="entry name" value="LPS_LOS_Heptosyltrfase"/>
</dbReference>
<dbReference type="InterPro" id="IPR049327">
    <property type="entry name" value="TibC/BAHTCr-like_N"/>
</dbReference>
<dbReference type="NCBIfam" id="TIGR04414">
    <property type="entry name" value="hepto_Aah_TibC"/>
    <property type="match status" value="1"/>
</dbReference>
<dbReference type="PANTHER" id="PTHR30160">
    <property type="entry name" value="TETRAACYLDISACCHARIDE 4'-KINASE-RELATED"/>
    <property type="match status" value="1"/>
</dbReference>
<dbReference type="Pfam" id="PF01075">
    <property type="entry name" value="Glyco_transf_9"/>
    <property type="match status" value="1"/>
</dbReference>
<dbReference type="Pfam" id="PF21129">
    <property type="entry name" value="TibC_1st"/>
    <property type="match status" value="1"/>
</dbReference>
<dbReference type="SUPFAM" id="SSF53756">
    <property type="entry name" value="UDP-Glycosyltransferase/glycogen phosphorylase"/>
    <property type="match status" value="1"/>
</dbReference>
<proteinExistence type="evidence at protein level"/>
<evidence type="ECO:0000250" key="1">
    <source>
        <dbReference type="UniProtKB" id="Q9S4K6"/>
    </source>
</evidence>
<evidence type="ECO:0000269" key="2">
    <source>
    </source>
</evidence>
<evidence type="ECO:0000269" key="3">
    <source>
    </source>
</evidence>
<evidence type="ECO:0000269" key="4">
    <source>
    </source>
</evidence>
<evidence type="ECO:0000269" key="5">
    <source>
    </source>
</evidence>
<evidence type="ECO:0000303" key="6">
    <source>
    </source>
</evidence>
<evidence type="ECO:0000303" key="7">
    <source>
    </source>
</evidence>
<evidence type="ECO:0000303" key="8">
    <source>
    </source>
</evidence>
<evidence type="ECO:0000305" key="9"/>
<evidence type="ECO:0000305" key="10">
    <source>
    </source>
</evidence>
<evidence type="ECO:0000305" key="11">
    <source>
    </source>
</evidence>
<evidence type="ECO:0000312" key="12">
    <source>
        <dbReference type="EMBL" id="ADH10229.1"/>
    </source>
</evidence>
<evidence type="ECO:0000312" key="13">
    <source>
        <dbReference type="EMBL" id="CAC43407.1"/>
    </source>
</evidence>
<reference evidence="13" key="1">
    <citation type="journal article" date="2001" name="Mol. Microbiol.">
        <title>Glycosylation with heptose residues mediated by the aah gene product is essential for adherence of the AIDA-I adhesin.</title>
        <authorList>
            <person name="Benz I."/>
            <person name="Schmidt M.A."/>
        </authorList>
    </citation>
    <scope>NUCLEOTIDE SEQUENCE [GENOMIC DNA]</scope>
    <scope>FUNCTION</scope>
    <scope>CATALYTIC ACTIVITY</scope>
    <scope>DISRUPTION PHENOTYPE</scope>
    <source>
        <strain evidence="13">O126:H27 / 2787 / DAEC</strain>
        <plasmid evidence="13">pIB6</plasmid>
    </source>
</reference>
<reference evidence="12" key="2">
    <citation type="journal article" date="2010" name="FEMS Microbiol. Lett.">
        <title>Growth-phase-dependent expression of the operon coding for the glycosylated autotransporter adhesin AIDA-I of pathogenic Escherichia coli.</title>
        <authorList>
            <person name="Berthiaume F."/>
            <person name="Leblond M.F."/>
            <person name="Harel J."/>
            <person name="Mourez M."/>
        </authorList>
    </citation>
    <scope>NUCLEOTIDE SEQUENCE [GENOMIC DNA]</scope>
    <scope>INDUCTION</scope>
    <source>
        <strain evidence="12">O126:H27 / 2787 / DAEC</strain>
        <plasmid evidence="12">unnamed</plasmid>
    </source>
</reference>
<reference evidence="9" key="3">
    <citation type="journal article" date="2014" name="Cell Host Microbe">
        <title>An iron-containing dodecameric heptosyltransferase family modifies bacterial autotransporters in pathogenesis.</title>
        <authorList>
            <person name="Lu Q."/>
            <person name="Yao Q."/>
            <person name="Xu Y."/>
            <person name="Li L."/>
            <person name="Li S."/>
            <person name="Liu Y."/>
            <person name="Gao W."/>
            <person name="Niu M."/>
            <person name="Sharon M."/>
            <person name="Ben-Nissan G."/>
            <person name="Zamyatina A."/>
            <person name="Liu X."/>
            <person name="Chen S."/>
            <person name="Shao F."/>
        </authorList>
    </citation>
    <scope>FUNCTION</scope>
    <scope>CATALYTIC ACTIVITY</scope>
    <scope>COFACTOR</scope>
    <scope>SUBUNIT</scope>
    <scope>SUBCELLULAR LOCATION</scope>
    <scope>DISRUPTION PHENOTYPE</scope>
    <scope>ACTIVE SITE</scope>
    <scope>MUTAGENESIS OF ASP-104; THR-220; LYS-224; ARG-280; TRP-299; CYS-352; CYS-364 AND CYS-374</scope>
</reference>
<reference evidence="9" key="4">
    <citation type="journal article" date="2014" name="Elife">
        <title>A structural mechanism for bacterial autotransporter glycosylation by a dodecameric heptosyltransferase family.</title>
        <authorList>
            <person name="Yao Q."/>
            <person name="Lu Q."/>
            <person name="Wan X."/>
            <person name="Song F."/>
            <person name="Xu Y."/>
            <person name="Hu M."/>
            <person name="Zamyatina A."/>
            <person name="Liu X."/>
            <person name="Huang N."/>
            <person name="Zhu P."/>
            <person name="Shao F."/>
        </authorList>
    </citation>
    <scope>FUNCTION</scope>
    <scope>CATALYTIC ACTIVITY</scope>
    <scope>MUTAGENESIS OF SER-294</scope>
</reference>
<name>AAH_ECOLX</name>
<feature type="chain" id="PRO_0000458486" description="Autotransporter heptosyltransferase Aah">
    <location>
        <begin position="1"/>
        <end position="391"/>
    </location>
</feature>
<feature type="active site" description="Proton acceptor" evidence="11">
    <location>
        <position position="104"/>
    </location>
</feature>
<feature type="binding site" evidence="1">
    <location>
        <position position="101"/>
    </location>
    <ligand>
        <name>ADP-D-glycero-beta-D-manno-heptose</name>
        <dbReference type="ChEBI" id="CHEBI:59967"/>
    </ligand>
</feature>
<feature type="binding site" evidence="1">
    <location>
        <position position="102"/>
    </location>
    <ligand>
        <name>ADP-D-glycero-beta-D-manno-heptose</name>
        <dbReference type="ChEBI" id="CHEBI:59967"/>
    </ligand>
</feature>
<feature type="binding site" evidence="1">
    <location>
        <position position="103"/>
    </location>
    <ligand>
        <name>ADP-D-glycero-beta-D-manno-heptose</name>
        <dbReference type="ChEBI" id="CHEBI:59967"/>
    </ligand>
</feature>
<feature type="binding site" evidence="1">
    <location>
        <position position="218"/>
    </location>
    <ligand>
        <name>ADP-D-glycero-beta-D-manno-heptose</name>
        <dbReference type="ChEBI" id="CHEBI:59967"/>
    </ligand>
</feature>
<feature type="binding site" evidence="1">
    <location>
        <position position="220"/>
    </location>
    <ligand>
        <name>ADP-D-glycero-beta-D-manno-heptose</name>
        <dbReference type="ChEBI" id="CHEBI:59967"/>
    </ligand>
</feature>
<feature type="binding site" evidence="1">
    <location>
        <position position="224"/>
    </location>
    <ligand>
        <name>ADP-D-glycero-beta-D-manno-heptose</name>
        <dbReference type="ChEBI" id="CHEBI:59967"/>
    </ligand>
</feature>
<feature type="binding site" evidence="1">
    <location>
        <position position="251"/>
    </location>
    <ligand>
        <name>ADP-D-glycero-beta-D-manno-heptose</name>
        <dbReference type="ChEBI" id="CHEBI:59967"/>
    </ligand>
</feature>
<feature type="binding site" evidence="1">
    <location>
        <position position="275"/>
    </location>
    <ligand>
        <name>ADP-D-glycero-beta-D-manno-heptose</name>
        <dbReference type="ChEBI" id="CHEBI:59967"/>
    </ligand>
</feature>
<feature type="binding site" evidence="1">
    <location>
        <position position="296"/>
    </location>
    <ligand>
        <name>ADP-D-glycero-beta-D-manno-heptose</name>
        <dbReference type="ChEBI" id="CHEBI:59967"/>
    </ligand>
</feature>
<feature type="binding site" evidence="1">
    <location>
        <position position="320"/>
    </location>
    <ligand>
        <name>ADP-D-glycero-beta-D-manno-heptose</name>
        <dbReference type="ChEBI" id="CHEBI:59967"/>
    </ligand>
</feature>
<feature type="binding site" evidence="1">
    <location>
        <position position="333"/>
    </location>
    <ligand>
        <name>Fe(3+)</name>
        <dbReference type="ChEBI" id="CHEBI:29034"/>
        <note>structural</note>
    </ligand>
</feature>
<feature type="binding site" evidence="1">
    <location>
        <position position="336"/>
    </location>
    <ligand>
        <name>Fe(3+)</name>
        <dbReference type="ChEBI" id="CHEBI:29034"/>
        <note>structural</note>
    </ligand>
</feature>
<feature type="binding site" evidence="1">
    <location>
        <position position="352"/>
    </location>
    <ligand>
        <name>Fe(3+)</name>
        <dbReference type="ChEBI" id="CHEBI:29034"/>
        <note>structural</note>
    </ligand>
</feature>
<feature type="binding site" evidence="1">
    <location>
        <position position="364"/>
    </location>
    <ligand>
        <name>Fe(3+)</name>
        <dbReference type="ChEBI" id="CHEBI:29034"/>
        <note>structural</note>
    </ligand>
</feature>
<feature type="mutagenesis site" description="Loss of catalytic activity. Loss of AIDA-I heptosylation and loss of bacteria adhesion to mammalian cells; in an aah2 deficient background." evidence="4">
    <original>D</original>
    <variation>A</variation>
    <variation>E</variation>
    <location>
        <position position="104"/>
    </location>
</feature>
<feature type="mutagenesis site" description="Loss of AIDA-I heptosylation and loss of bacteria adhesion to mammalian cells; in an aah2 deficient background." evidence="4">
    <original>T</original>
    <variation>A</variation>
    <location>
        <position position="220"/>
    </location>
</feature>
<feature type="mutagenesis site" description="Loss of catalytic activity. Loss of AIDA-I heptosylation and loss of bacteria adhesion to mammalian cells; in an aah2 deficient background." evidence="4">
    <original>K</original>
    <variation>A</variation>
    <location>
        <position position="224"/>
    </location>
</feature>
<feature type="mutagenesis site" description="Severe loss of AIDA-I heptosylation and loss of bacteria adhesion to mammalian cells; in an aah2 deficient background." evidence="4">
    <original>R</original>
    <variation>A</variation>
    <location>
        <position position="280"/>
    </location>
</feature>
<feature type="mutagenesis site" description="Loss of the ability to use ADP- L, D-heptose as a sugar donor." evidence="5">
    <original>S</original>
    <variation>P</variation>
    <location>
        <position position="294"/>
    </location>
</feature>
<feature type="mutagenesis site" description="Loss of AIDA-I heptosylation and loss of bacteria adhesion to mammalian cells; in an aah2 deficient background." evidence="4">
    <original>W</original>
    <variation>A</variation>
    <location>
        <position position="299"/>
    </location>
</feature>
<feature type="mutagenesis site" description="Loss of iron binding. Loss of catalytic activity." evidence="4">
    <original>C</original>
    <variation>S</variation>
    <location>
        <position position="352"/>
    </location>
</feature>
<feature type="mutagenesis site" description="Loss of iron binding. Loss of catalytic activity." evidence="4">
    <original>C</original>
    <variation>S</variation>
    <location>
        <position position="364"/>
    </location>
</feature>
<feature type="mutagenesis site" description="No effect on catalytic activity." evidence="4">
    <original>C</original>
    <variation>S</variation>
    <location>
        <position position="374"/>
    </location>
</feature>